<organism>
    <name type="scientific">Lobularia maritima</name>
    <name type="common">Sweet alyssum</name>
    <name type="synonym">Alyssum maritimum</name>
    <dbReference type="NCBI Taxonomy" id="226051"/>
    <lineage>
        <taxon>Eukaryota</taxon>
        <taxon>Viridiplantae</taxon>
        <taxon>Streptophyta</taxon>
        <taxon>Embryophyta</taxon>
        <taxon>Tracheophyta</taxon>
        <taxon>Spermatophyta</taxon>
        <taxon>Magnoliopsida</taxon>
        <taxon>eudicotyledons</taxon>
        <taxon>Gunneridae</taxon>
        <taxon>Pentapetalae</taxon>
        <taxon>rosids</taxon>
        <taxon>malvids</taxon>
        <taxon>Brassicales</taxon>
        <taxon>Brassicaceae</taxon>
        <taxon>Anastaticeae</taxon>
        <taxon>Lobularia</taxon>
    </lineage>
</organism>
<gene>
    <name evidence="1" type="primary">psaA</name>
</gene>
<keyword id="KW-0004">4Fe-4S</keyword>
<keyword id="KW-0148">Chlorophyll</keyword>
<keyword id="KW-0150">Chloroplast</keyword>
<keyword id="KW-0157">Chromophore</keyword>
<keyword id="KW-0249">Electron transport</keyword>
<keyword id="KW-0408">Iron</keyword>
<keyword id="KW-0411">Iron-sulfur</keyword>
<keyword id="KW-0460">Magnesium</keyword>
<keyword id="KW-0472">Membrane</keyword>
<keyword id="KW-0479">Metal-binding</keyword>
<keyword id="KW-0560">Oxidoreductase</keyword>
<keyword id="KW-0602">Photosynthesis</keyword>
<keyword id="KW-0603">Photosystem I</keyword>
<keyword id="KW-0934">Plastid</keyword>
<keyword id="KW-0793">Thylakoid</keyword>
<keyword id="KW-0812">Transmembrane</keyword>
<keyword id="KW-1133">Transmembrane helix</keyword>
<keyword id="KW-0813">Transport</keyword>
<comment type="function">
    <text>PsaA and PsaB bind P700, the primary electron donor of photosystem I (PSI), as well as the electron acceptors A0, A1 and FX. PSI is a plastocyanin-ferredoxin oxidoreductase, converting photonic excitation into a charge separation, which transfers an electron from the donor P700 chlorophyll pair to the spectroscopically characterized acceptors A0, A1, FX, FA and FB in turn. Oxidized P700 is reduced on the lumenal side of the thylakoid membrane by plastocyanin.</text>
</comment>
<comment type="catalytic activity">
    <reaction evidence="1">
        <text>reduced [plastocyanin] + hnu + oxidized [2Fe-2S]-[ferredoxin] = oxidized [plastocyanin] + reduced [2Fe-2S]-[ferredoxin]</text>
        <dbReference type="Rhea" id="RHEA:30407"/>
        <dbReference type="Rhea" id="RHEA-COMP:10000"/>
        <dbReference type="Rhea" id="RHEA-COMP:10001"/>
        <dbReference type="Rhea" id="RHEA-COMP:10039"/>
        <dbReference type="Rhea" id="RHEA-COMP:10040"/>
        <dbReference type="ChEBI" id="CHEBI:29036"/>
        <dbReference type="ChEBI" id="CHEBI:30212"/>
        <dbReference type="ChEBI" id="CHEBI:33737"/>
        <dbReference type="ChEBI" id="CHEBI:33738"/>
        <dbReference type="ChEBI" id="CHEBI:49552"/>
        <dbReference type="EC" id="1.97.1.12"/>
    </reaction>
</comment>
<comment type="cofactor">
    <text evidence="1">P700 is a chlorophyll a/chlorophyll a' dimer, A0 is one or more chlorophyll a, A1 is one or both phylloquinones and FX is a shared 4Fe-4S iron-sulfur center.</text>
</comment>
<comment type="subunit">
    <text evidence="1">The PsaA/B heterodimer binds the P700 chlorophyll special pair and subsequent electron acceptors. PSI consists of a core antenna complex that captures photons, and an electron transfer chain that converts photonic excitation into a charge separation. The eukaryotic PSI reaction center is composed of at least 11 subunits.</text>
</comment>
<comment type="subcellular location">
    <subcellularLocation>
        <location evidence="1">Plastid</location>
        <location evidence="1">Chloroplast thylakoid membrane</location>
        <topology evidence="1">Multi-pass membrane protein</topology>
    </subcellularLocation>
</comment>
<comment type="similarity">
    <text evidence="1">Belongs to the PsaA/PsaB family.</text>
</comment>
<reference key="1">
    <citation type="submission" date="2007-03" db="EMBL/GenBank/DDBJ databases">
        <title>Sequencing analysis of Lobularia maritima chloroplast DNA.</title>
        <authorList>
            <person name="Hosouchi T."/>
            <person name="Tsuruoka H."/>
            <person name="Kotani H."/>
        </authorList>
    </citation>
    <scope>NUCLEOTIDE SEQUENCE [LARGE SCALE GENOMIC DNA]</scope>
</reference>
<protein>
    <recommendedName>
        <fullName evidence="1">Photosystem I P700 chlorophyll a apoprotein A1</fullName>
        <ecNumber evidence="1">1.97.1.12</ecNumber>
    </recommendedName>
    <alternativeName>
        <fullName evidence="1">PSI-A</fullName>
    </alternativeName>
    <alternativeName>
        <fullName evidence="1">PsaA</fullName>
    </alternativeName>
</protein>
<feature type="chain" id="PRO_0000294224" description="Photosystem I P700 chlorophyll a apoprotein A1">
    <location>
        <begin position="1"/>
        <end position="750"/>
    </location>
</feature>
<feature type="transmembrane region" description="Helical; Name=I" evidence="1">
    <location>
        <begin position="70"/>
        <end position="93"/>
    </location>
</feature>
<feature type="transmembrane region" description="Helical; Name=II" evidence="1">
    <location>
        <begin position="156"/>
        <end position="179"/>
    </location>
</feature>
<feature type="transmembrane region" description="Helical; Name=III" evidence="1">
    <location>
        <begin position="195"/>
        <end position="219"/>
    </location>
</feature>
<feature type="transmembrane region" description="Helical; Name=IV" evidence="1">
    <location>
        <begin position="291"/>
        <end position="309"/>
    </location>
</feature>
<feature type="transmembrane region" description="Helical; Name=V" evidence="1">
    <location>
        <begin position="346"/>
        <end position="369"/>
    </location>
</feature>
<feature type="transmembrane region" description="Helical; Name=VI" evidence="1">
    <location>
        <begin position="385"/>
        <end position="411"/>
    </location>
</feature>
<feature type="transmembrane region" description="Helical; Name=VII" evidence="1">
    <location>
        <begin position="433"/>
        <end position="455"/>
    </location>
</feature>
<feature type="transmembrane region" description="Helical; Name=VIII" evidence="1">
    <location>
        <begin position="531"/>
        <end position="549"/>
    </location>
</feature>
<feature type="transmembrane region" description="Helical; Name=IX" evidence="1">
    <location>
        <begin position="589"/>
        <end position="610"/>
    </location>
</feature>
<feature type="transmembrane region" description="Helical; Name=X" evidence="1">
    <location>
        <begin position="664"/>
        <end position="686"/>
    </location>
</feature>
<feature type="transmembrane region" description="Helical; Name=XI" evidence="1">
    <location>
        <begin position="724"/>
        <end position="744"/>
    </location>
</feature>
<feature type="binding site" evidence="1">
    <location>
        <position position="573"/>
    </location>
    <ligand>
        <name>[4Fe-4S] cluster</name>
        <dbReference type="ChEBI" id="CHEBI:49883"/>
        <note>ligand shared between dimeric partners</note>
    </ligand>
</feature>
<feature type="binding site" evidence="1">
    <location>
        <position position="582"/>
    </location>
    <ligand>
        <name>[4Fe-4S] cluster</name>
        <dbReference type="ChEBI" id="CHEBI:49883"/>
        <note>ligand shared between dimeric partners</note>
    </ligand>
</feature>
<feature type="binding site" description="axial binding residue" evidence="1">
    <location>
        <position position="675"/>
    </location>
    <ligand>
        <name>chlorophyll a'</name>
        <dbReference type="ChEBI" id="CHEBI:189419"/>
        <label>A1</label>
    </ligand>
    <ligandPart>
        <name>Mg</name>
        <dbReference type="ChEBI" id="CHEBI:25107"/>
    </ligandPart>
</feature>
<feature type="binding site" description="axial binding residue" evidence="1">
    <location>
        <position position="683"/>
    </location>
    <ligand>
        <name>chlorophyll a</name>
        <dbReference type="ChEBI" id="CHEBI:58416"/>
        <label>A3</label>
    </ligand>
    <ligandPart>
        <name>Mg</name>
        <dbReference type="ChEBI" id="CHEBI:25107"/>
    </ligandPart>
</feature>
<feature type="binding site" evidence="1">
    <location>
        <position position="691"/>
    </location>
    <ligand>
        <name>chlorophyll a</name>
        <dbReference type="ChEBI" id="CHEBI:58416"/>
        <label>A3</label>
    </ligand>
</feature>
<feature type="binding site" evidence="1">
    <location>
        <position position="692"/>
    </location>
    <ligand>
        <name>phylloquinone</name>
        <dbReference type="ChEBI" id="CHEBI:18067"/>
        <label>A</label>
    </ligand>
</feature>
<proteinExistence type="inferred from homology"/>
<name>PSAA_LOBMA</name>
<evidence type="ECO:0000255" key="1">
    <source>
        <dbReference type="HAMAP-Rule" id="MF_00458"/>
    </source>
</evidence>
<sequence length="750" mass="83219">MIIRSPEPEVKILVDRDPIKTSFEEWAKPGHFSRTIAKGPDTTTWIWNLHADAHDFDSHTSDLEEISRKVFSAHFGQLSIIFLWLSGMYFHGARFSNYEAWLSDPTHIGPSAQVVWPIVGQEILNGDVGGGFRGIQITSGFFQIWRASGITSELQLYCTAIGALVFAALMLFAGWFHYHKAAPKLAWFQDVESMLNHHLAGLLGLGSLSWAGHQVHVSLPINQFLNAGVDPKEIPLPHEFILNRDLLAQLYPSFSEGATPFFTLNWSKYSEFLTFRGGLDPVTGGLWLTDIAHHHLAIAILFLIAGHMYRTNWGIGHGLKDILEAHKGPFTGQGHKGLYEILTTSWHAQLSLNLAMLGSLTIVVAHHMYSMPPYPYLATDYATQLSLFTHHMWIGGFLIVGAAAHAAIFMVRDYDPTNRYNDLLDRVLRHRDAIISHLNWVCIFLGFHSFGLYIHNDTMSALGRPQDMFSDTAIQLQPVFAQWIQNTHALAPGVTAPGETASTSLTWGGGELVAVGGKVALLPIPLGTADFLVHHIHAFTIHVTVLILLKGVLFARSSRLIPDKANLGFRFPCDGPGRGGTCQVSAWDHVFLGLFWMYNAISVVIFHFSWKMQSDVWGSISDQGVVTHITGGNFAQSSITINGWLRDFLWAQASQVIQSYGSSLSAYGLFFLGAHFVWAFSLMFLFSGRGYWQELIESIVWAHNKLKVAPATQPRALSIVQGRAVGVTHYLLGGIATTWAFFLARIIAVG</sequence>
<geneLocation type="chloroplast"/>
<dbReference type="EC" id="1.97.1.12" evidence="1"/>
<dbReference type="EMBL" id="AP009375">
    <property type="protein sequence ID" value="BAF50549.1"/>
    <property type="molecule type" value="Genomic_DNA"/>
</dbReference>
<dbReference type="RefSeq" id="YP_001123725.1">
    <property type="nucleotide sequence ID" value="NC_009274.1"/>
</dbReference>
<dbReference type="SMR" id="A4QLJ4"/>
<dbReference type="GeneID" id="4964830"/>
<dbReference type="GO" id="GO:0009535">
    <property type="term" value="C:chloroplast thylakoid membrane"/>
    <property type="evidence" value="ECO:0007669"/>
    <property type="project" value="UniProtKB-SubCell"/>
</dbReference>
<dbReference type="GO" id="GO:0009522">
    <property type="term" value="C:photosystem I"/>
    <property type="evidence" value="ECO:0007669"/>
    <property type="project" value="UniProtKB-KW"/>
</dbReference>
<dbReference type="GO" id="GO:0051539">
    <property type="term" value="F:4 iron, 4 sulfur cluster binding"/>
    <property type="evidence" value="ECO:0007669"/>
    <property type="project" value="UniProtKB-KW"/>
</dbReference>
<dbReference type="GO" id="GO:0016168">
    <property type="term" value="F:chlorophyll binding"/>
    <property type="evidence" value="ECO:0007669"/>
    <property type="project" value="UniProtKB-KW"/>
</dbReference>
<dbReference type="GO" id="GO:0009055">
    <property type="term" value="F:electron transfer activity"/>
    <property type="evidence" value="ECO:0007669"/>
    <property type="project" value="UniProtKB-UniRule"/>
</dbReference>
<dbReference type="GO" id="GO:0000287">
    <property type="term" value="F:magnesium ion binding"/>
    <property type="evidence" value="ECO:0007669"/>
    <property type="project" value="UniProtKB-UniRule"/>
</dbReference>
<dbReference type="GO" id="GO:0016491">
    <property type="term" value="F:oxidoreductase activity"/>
    <property type="evidence" value="ECO:0007669"/>
    <property type="project" value="UniProtKB-KW"/>
</dbReference>
<dbReference type="GO" id="GO:0015979">
    <property type="term" value="P:photosynthesis"/>
    <property type="evidence" value="ECO:0007669"/>
    <property type="project" value="UniProtKB-UniRule"/>
</dbReference>
<dbReference type="FunFam" id="1.20.1130.10:FF:000001">
    <property type="entry name" value="Photosystem I P700 chlorophyll a apoprotein A2"/>
    <property type="match status" value="1"/>
</dbReference>
<dbReference type="Gene3D" id="1.20.1130.10">
    <property type="entry name" value="Photosystem I PsaA/PsaB"/>
    <property type="match status" value="1"/>
</dbReference>
<dbReference type="HAMAP" id="MF_00458">
    <property type="entry name" value="PSI_PsaA"/>
    <property type="match status" value="1"/>
</dbReference>
<dbReference type="InterPro" id="IPR006243">
    <property type="entry name" value="PSI_PsaA"/>
</dbReference>
<dbReference type="InterPro" id="IPR001280">
    <property type="entry name" value="PSI_PsaA/B"/>
</dbReference>
<dbReference type="InterPro" id="IPR020586">
    <property type="entry name" value="PSI_PsaA/B_CS"/>
</dbReference>
<dbReference type="InterPro" id="IPR036408">
    <property type="entry name" value="PSI_PsaA/B_sf"/>
</dbReference>
<dbReference type="NCBIfam" id="TIGR01335">
    <property type="entry name" value="psaA"/>
    <property type="match status" value="1"/>
</dbReference>
<dbReference type="PANTHER" id="PTHR30128">
    <property type="entry name" value="OUTER MEMBRANE PROTEIN, OMPA-RELATED"/>
    <property type="match status" value="1"/>
</dbReference>
<dbReference type="PANTHER" id="PTHR30128:SF19">
    <property type="entry name" value="PHOTOSYSTEM I P700 CHLOROPHYLL A APOPROTEIN A1-RELATED"/>
    <property type="match status" value="1"/>
</dbReference>
<dbReference type="Pfam" id="PF00223">
    <property type="entry name" value="PsaA_PsaB"/>
    <property type="match status" value="1"/>
</dbReference>
<dbReference type="PIRSF" id="PIRSF002905">
    <property type="entry name" value="PSI_A"/>
    <property type="match status" value="1"/>
</dbReference>
<dbReference type="PRINTS" id="PR00257">
    <property type="entry name" value="PHOTSYSPSAAB"/>
</dbReference>
<dbReference type="SUPFAM" id="SSF81558">
    <property type="entry name" value="Photosystem I subunits PsaA/PsaB"/>
    <property type="match status" value="1"/>
</dbReference>
<dbReference type="PROSITE" id="PS00419">
    <property type="entry name" value="PHOTOSYSTEM_I_PSAAB"/>
    <property type="match status" value="1"/>
</dbReference>
<accession>A4QLJ4</accession>